<accession>A3CMV2</accession>
<name>ENGB_STRSV</name>
<protein>
    <recommendedName>
        <fullName evidence="1">Probable GTP-binding protein EngB</fullName>
    </recommendedName>
</protein>
<reference key="1">
    <citation type="journal article" date="2007" name="J. Bacteriol.">
        <title>Genome of the opportunistic pathogen Streptococcus sanguinis.</title>
        <authorList>
            <person name="Xu P."/>
            <person name="Alves J.M."/>
            <person name="Kitten T."/>
            <person name="Brown A."/>
            <person name="Chen Z."/>
            <person name="Ozaki L.S."/>
            <person name="Manque P."/>
            <person name="Ge X."/>
            <person name="Serrano M.G."/>
            <person name="Puiu D."/>
            <person name="Hendricks S."/>
            <person name="Wang Y."/>
            <person name="Chaplin M.D."/>
            <person name="Akan D."/>
            <person name="Paik S."/>
            <person name="Peterson D.L."/>
            <person name="Macrina F.L."/>
            <person name="Buck G.A."/>
        </authorList>
    </citation>
    <scope>NUCLEOTIDE SEQUENCE [LARGE SCALE GENOMIC DNA]</scope>
    <source>
        <strain>SK36</strain>
    </source>
</reference>
<sequence>MEINTHNAEILLSAANKSHYPQDDIPEIALAGRSNVGKSSFINTLLNRKNLARTSGKPGKTQLLNFFNIDDKLRFVDVPGYGYARVSKKEREKWGRMIEEYLTSRENLRAVVSLVDLRHDPSADDVQMYEFLKYYDIPVILVATKADKIPRGKWNKHESAIKKKLDFDKNDDFILFSSVTKDGLDAAWDAILSKI</sequence>
<dbReference type="EMBL" id="CP000387">
    <property type="protein sequence ID" value="ABN44507.1"/>
    <property type="molecule type" value="Genomic_DNA"/>
</dbReference>
<dbReference type="RefSeq" id="WP_002915299.1">
    <property type="nucleotide sequence ID" value="NC_009009.1"/>
</dbReference>
<dbReference type="RefSeq" id="YP_001035057.1">
    <property type="nucleotide sequence ID" value="NC_009009.1"/>
</dbReference>
<dbReference type="SMR" id="A3CMV2"/>
<dbReference type="STRING" id="388919.SSA_1094"/>
<dbReference type="KEGG" id="ssa:SSA_1094"/>
<dbReference type="PATRIC" id="fig|388919.9.peg.1041"/>
<dbReference type="eggNOG" id="COG0218">
    <property type="taxonomic scope" value="Bacteria"/>
</dbReference>
<dbReference type="HOGENOM" id="CLU_033732_3_0_9"/>
<dbReference type="OrthoDB" id="9804921at2"/>
<dbReference type="Proteomes" id="UP000002148">
    <property type="component" value="Chromosome"/>
</dbReference>
<dbReference type="GO" id="GO:0005829">
    <property type="term" value="C:cytosol"/>
    <property type="evidence" value="ECO:0007669"/>
    <property type="project" value="TreeGrafter"/>
</dbReference>
<dbReference type="GO" id="GO:0005525">
    <property type="term" value="F:GTP binding"/>
    <property type="evidence" value="ECO:0007669"/>
    <property type="project" value="UniProtKB-UniRule"/>
</dbReference>
<dbReference type="GO" id="GO:0046872">
    <property type="term" value="F:metal ion binding"/>
    <property type="evidence" value="ECO:0007669"/>
    <property type="project" value="UniProtKB-KW"/>
</dbReference>
<dbReference type="GO" id="GO:0000917">
    <property type="term" value="P:division septum assembly"/>
    <property type="evidence" value="ECO:0007669"/>
    <property type="project" value="UniProtKB-KW"/>
</dbReference>
<dbReference type="CDD" id="cd01876">
    <property type="entry name" value="YihA_EngB"/>
    <property type="match status" value="1"/>
</dbReference>
<dbReference type="FunFam" id="3.40.50.300:FF:000098">
    <property type="entry name" value="Probable GTP-binding protein EngB"/>
    <property type="match status" value="1"/>
</dbReference>
<dbReference type="Gene3D" id="3.40.50.300">
    <property type="entry name" value="P-loop containing nucleotide triphosphate hydrolases"/>
    <property type="match status" value="1"/>
</dbReference>
<dbReference type="HAMAP" id="MF_00321">
    <property type="entry name" value="GTPase_EngB"/>
    <property type="match status" value="1"/>
</dbReference>
<dbReference type="InterPro" id="IPR030393">
    <property type="entry name" value="G_ENGB_dom"/>
</dbReference>
<dbReference type="InterPro" id="IPR006073">
    <property type="entry name" value="GTP-bd"/>
</dbReference>
<dbReference type="InterPro" id="IPR019987">
    <property type="entry name" value="GTP-bd_ribosome_bio_YsxC"/>
</dbReference>
<dbReference type="InterPro" id="IPR027417">
    <property type="entry name" value="P-loop_NTPase"/>
</dbReference>
<dbReference type="InterPro" id="IPR005225">
    <property type="entry name" value="Small_GTP-bd"/>
</dbReference>
<dbReference type="NCBIfam" id="TIGR03598">
    <property type="entry name" value="GTPase_YsxC"/>
    <property type="match status" value="1"/>
</dbReference>
<dbReference type="NCBIfam" id="TIGR00231">
    <property type="entry name" value="small_GTP"/>
    <property type="match status" value="1"/>
</dbReference>
<dbReference type="PANTHER" id="PTHR11649:SF13">
    <property type="entry name" value="ENGB-TYPE G DOMAIN-CONTAINING PROTEIN"/>
    <property type="match status" value="1"/>
</dbReference>
<dbReference type="PANTHER" id="PTHR11649">
    <property type="entry name" value="MSS1/TRME-RELATED GTP-BINDING PROTEIN"/>
    <property type="match status" value="1"/>
</dbReference>
<dbReference type="Pfam" id="PF01926">
    <property type="entry name" value="MMR_HSR1"/>
    <property type="match status" value="1"/>
</dbReference>
<dbReference type="PRINTS" id="PR00449">
    <property type="entry name" value="RASTRNSFRMNG"/>
</dbReference>
<dbReference type="SUPFAM" id="SSF52540">
    <property type="entry name" value="P-loop containing nucleoside triphosphate hydrolases"/>
    <property type="match status" value="1"/>
</dbReference>
<dbReference type="PROSITE" id="PS51706">
    <property type="entry name" value="G_ENGB"/>
    <property type="match status" value="1"/>
</dbReference>
<proteinExistence type="inferred from homology"/>
<feature type="chain" id="PRO_1000005863" description="Probable GTP-binding protein EngB">
    <location>
        <begin position="1"/>
        <end position="195"/>
    </location>
</feature>
<feature type="domain" description="EngB-type G" evidence="1">
    <location>
        <begin position="24"/>
        <end position="195"/>
    </location>
</feature>
<feature type="binding site" evidence="1">
    <location>
        <begin position="32"/>
        <end position="39"/>
    </location>
    <ligand>
        <name>GTP</name>
        <dbReference type="ChEBI" id="CHEBI:37565"/>
    </ligand>
</feature>
<feature type="binding site" evidence="1">
    <location>
        <position position="39"/>
    </location>
    <ligand>
        <name>Mg(2+)</name>
        <dbReference type="ChEBI" id="CHEBI:18420"/>
    </ligand>
</feature>
<feature type="binding site" evidence="1">
    <location>
        <begin position="59"/>
        <end position="63"/>
    </location>
    <ligand>
        <name>GTP</name>
        <dbReference type="ChEBI" id="CHEBI:37565"/>
    </ligand>
</feature>
<feature type="binding site" evidence="1">
    <location>
        <position position="61"/>
    </location>
    <ligand>
        <name>Mg(2+)</name>
        <dbReference type="ChEBI" id="CHEBI:18420"/>
    </ligand>
</feature>
<feature type="binding site" evidence="1">
    <location>
        <begin position="77"/>
        <end position="80"/>
    </location>
    <ligand>
        <name>GTP</name>
        <dbReference type="ChEBI" id="CHEBI:37565"/>
    </ligand>
</feature>
<feature type="binding site" evidence="1">
    <location>
        <begin position="144"/>
        <end position="147"/>
    </location>
    <ligand>
        <name>GTP</name>
        <dbReference type="ChEBI" id="CHEBI:37565"/>
    </ligand>
</feature>
<feature type="binding site" evidence="1">
    <location>
        <begin position="176"/>
        <end position="178"/>
    </location>
    <ligand>
        <name>GTP</name>
        <dbReference type="ChEBI" id="CHEBI:37565"/>
    </ligand>
</feature>
<evidence type="ECO:0000255" key="1">
    <source>
        <dbReference type="HAMAP-Rule" id="MF_00321"/>
    </source>
</evidence>
<gene>
    <name evidence="1" type="primary">engB</name>
    <name type="ordered locus">SSA_1094</name>
</gene>
<comment type="function">
    <text evidence="1">Necessary for normal cell division and for the maintenance of normal septation.</text>
</comment>
<comment type="cofactor">
    <cofactor evidence="1">
        <name>Mg(2+)</name>
        <dbReference type="ChEBI" id="CHEBI:18420"/>
    </cofactor>
</comment>
<comment type="similarity">
    <text evidence="1">Belongs to the TRAFAC class TrmE-Era-EngA-EngB-Septin-like GTPase superfamily. EngB GTPase family.</text>
</comment>
<organism>
    <name type="scientific">Streptococcus sanguinis (strain SK36)</name>
    <dbReference type="NCBI Taxonomy" id="388919"/>
    <lineage>
        <taxon>Bacteria</taxon>
        <taxon>Bacillati</taxon>
        <taxon>Bacillota</taxon>
        <taxon>Bacilli</taxon>
        <taxon>Lactobacillales</taxon>
        <taxon>Streptococcaceae</taxon>
        <taxon>Streptococcus</taxon>
    </lineage>
</organism>
<keyword id="KW-0131">Cell cycle</keyword>
<keyword id="KW-0132">Cell division</keyword>
<keyword id="KW-0342">GTP-binding</keyword>
<keyword id="KW-0460">Magnesium</keyword>
<keyword id="KW-0479">Metal-binding</keyword>
<keyword id="KW-0547">Nucleotide-binding</keyword>
<keyword id="KW-1185">Reference proteome</keyword>
<keyword id="KW-0717">Septation</keyword>